<dbReference type="EC" id="3.5.99.6"/>
<dbReference type="EMBL" id="AY211495">
    <property type="protein sequence ID" value="AAO43398.1"/>
    <property type="molecule type" value="Genomic_DNA"/>
</dbReference>
<dbReference type="SMR" id="P59686"/>
<dbReference type="STRING" id="1421.A2J09_05000"/>
<dbReference type="UniPathway" id="UPA00629">
    <property type="reaction ID" value="UER00684"/>
</dbReference>
<dbReference type="GO" id="GO:0005737">
    <property type="term" value="C:cytoplasm"/>
    <property type="evidence" value="ECO:0007669"/>
    <property type="project" value="TreeGrafter"/>
</dbReference>
<dbReference type="GO" id="GO:0004342">
    <property type="term" value="F:glucosamine-6-phosphate deaminase activity"/>
    <property type="evidence" value="ECO:0007669"/>
    <property type="project" value="UniProtKB-EC"/>
</dbReference>
<dbReference type="GO" id="GO:0042802">
    <property type="term" value="F:identical protein binding"/>
    <property type="evidence" value="ECO:0007669"/>
    <property type="project" value="TreeGrafter"/>
</dbReference>
<dbReference type="GO" id="GO:0005975">
    <property type="term" value="P:carbohydrate metabolic process"/>
    <property type="evidence" value="ECO:0007669"/>
    <property type="project" value="InterPro"/>
</dbReference>
<dbReference type="GO" id="GO:0006043">
    <property type="term" value="P:glucosamine catabolic process"/>
    <property type="evidence" value="ECO:0007669"/>
    <property type="project" value="TreeGrafter"/>
</dbReference>
<dbReference type="GO" id="GO:0006046">
    <property type="term" value="P:N-acetylglucosamine catabolic process"/>
    <property type="evidence" value="ECO:0007669"/>
    <property type="project" value="TreeGrafter"/>
</dbReference>
<dbReference type="GO" id="GO:0019262">
    <property type="term" value="P:N-acetylneuraminate catabolic process"/>
    <property type="evidence" value="ECO:0007669"/>
    <property type="project" value="UniProtKB-UniPathway"/>
</dbReference>
<dbReference type="CDD" id="cd01399">
    <property type="entry name" value="GlcN6P_deaminase"/>
    <property type="match status" value="1"/>
</dbReference>
<dbReference type="Gene3D" id="3.40.50.1360">
    <property type="match status" value="1"/>
</dbReference>
<dbReference type="InterPro" id="IPR006148">
    <property type="entry name" value="Glc/Gal-6P_isomerase"/>
</dbReference>
<dbReference type="InterPro" id="IPR004547">
    <property type="entry name" value="Glucosamine6P_isomerase"/>
</dbReference>
<dbReference type="InterPro" id="IPR018321">
    <property type="entry name" value="Glucosamine6P_isomerase_CS"/>
</dbReference>
<dbReference type="InterPro" id="IPR037171">
    <property type="entry name" value="NagB/RpiA_transferase-like"/>
</dbReference>
<dbReference type="PANTHER" id="PTHR11280">
    <property type="entry name" value="GLUCOSAMINE-6-PHOSPHATE ISOMERASE"/>
    <property type="match status" value="1"/>
</dbReference>
<dbReference type="PANTHER" id="PTHR11280:SF5">
    <property type="entry name" value="GLUCOSAMINE-6-PHOSPHATE ISOMERASE"/>
    <property type="match status" value="1"/>
</dbReference>
<dbReference type="Pfam" id="PF01182">
    <property type="entry name" value="Glucosamine_iso"/>
    <property type="match status" value="1"/>
</dbReference>
<dbReference type="SUPFAM" id="SSF100950">
    <property type="entry name" value="NagB/RpiA/CoA transferase-like"/>
    <property type="match status" value="1"/>
</dbReference>
<dbReference type="PROSITE" id="PS01161">
    <property type="entry name" value="GLC_GALNAC_ISOMERASE"/>
    <property type="match status" value="1"/>
</dbReference>
<name>NAGB_LYSSH</name>
<keyword id="KW-0119">Carbohydrate metabolism</keyword>
<keyword id="KW-0378">Hydrolase</keyword>
<protein>
    <recommendedName>
        <fullName>Glucosamine-6-phosphate deaminase</fullName>
        <ecNumber>3.5.99.6</ecNumber>
    </recommendedName>
    <alternativeName>
        <fullName>GlcN6P deaminase</fullName>
        <shortName>GNPDA</shortName>
    </alternativeName>
    <alternativeName>
        <fullName>Glucosamine-6-phosphate isomerase</fullName>
    </alternativeName>
</protein>
<gene>
    <name type="primary">nagB</name>
</gene>
<proteinExistence type="evidence at transcript level"/>
<feature type="chain" id="PRO_0000160132" description="Glucosamine-6-phosphate deaminase">
    <location>
        <begin position="1"/>
        <end position="221"/>
    </location>
</feature>
<feature type="active site" description="Proton acceptor; for enolization step" evidence="1">
    <location>
        <position position="49"/>
    </location>
</feature>
<feature type="active site" description="For ring-opening step" evidence="1">
    <location>
        <position position="115"/>
    </location>
</feature>
<feature type="active site" description="Proton acceptor; for ring-opening step" evidence="1">
    <location>
        <position position="117"/>
    </location>
</feature>
<feature type="active site" description="For ring-opening step" evidence="1">
    <location>
        <position position="122"/>
    </location>
</feature>
<comment type="function">
    <text>Catalyzes the reversible isomerization-deamination of glucosamine 6-phosphate (GlcN6P) to form fructose 6-phosphate (Fru6P) and ammonium ion.</text>
</comment>
<comment type="catalytic activity">
    <reaction>
        <text>alpha-D-glucosamine 6-phosphate + H2O = beta-D-fructose 6-phosphate + NH4(+)</text>
        <dbReference type="Rhea" id="RHEA:12172"/>
        <dbReference type="ChEBI" id="CHEBI:15377"/>
        <dbReference type="ChEBI" id="CHEBI:28938"/>
        <dbReference type="ChEBI" id="CHEBI:57634"/>
        <dbReference type="ChEBI" id="CHEBI:75989"/>
        <dbReference type="EC" id="3.5.99.6"/>
    </reaction>
</comment>
<comment type="pathway">
    <text>Amino-sugar metabolism; N-acetylneuraminate degradation; D-fructose 6-phosphate from N-acetylneuraminate: step 5/5.</text>
</comment>
<comment type="induction">
    <text>By N-acetylglucosamine.</text>
</comment>
<comment type="similarity">
    <text evidence="2">Belongs to the glucosamine/galactosamine-6-phosphate isomerase family. NagB subfamily.</text>
</comment>
<accession>P59686</accession>
<reference key="1">
    <citation type="journal article" date="2003" name="Microbiology">
        <title>Phosphoenolpyruvate phosphotransferase system and N-acetylglucosamine metabolism in Bacillus sphaericus.</title>
        <authorList>
            <person name="Alice A.F."/>
            <person name="Perez-Martinez G."/>
            <person name="Sanchez-Rivas C."/>
        </authorList>
    </citation>
    <scope>NUCLEOTIDE SEQUENCE [GENOMIC DNA]</scope>
    <source>
        <strain>2362</strain>
    </source>
</reference>
<sequence>MHEPLPSLRLLNNGSTTFGLATGGTMEPLYAKICKTDIDFSNCISFNLDEYVGLEANHEQSYAYYMHQHLFHEKPFQASYLPNGLATNPLEEAARYEALLQQHSLDFQLLGIGQNGHIGFNEPGTSFESLTHLVTLEESTRQANARFFSSINEVPTQAFTMGIQSIMRAKCILLIAVGETKREVLERVLASDYTEEIPASALTKHPNVIILTDLQVEENKS</sequence>
<evidence type="ECO:0000250" key="1"/>
<evidence type="ECO:0000305" key="2"/>
<organism>
    <name type="scientific">Lysinibacillus sphaericus</name>
    <name type="common">Bacillus sphaericus</name>
    <dbReference type="NCBI Taxonomy" id="1421"/>
    <lineage>
        <taxon>Bacteria</taxon>
        <taxon>Bacillati</taxon>
        <taxon>Bacillota</taxon>
        <taxon>Bacilli</taxon>
        <taxon>Bacillales</taxon>
        <taxon>Bacillaceae</taxon>
        <taxon>Lysinibacillus</taxon>
    </lineage>
</organism>